<proteinExistence type="evidence at protein level"/>
<organism>
    <name type="scientific">Opisthacanthus cayaporum</name>
    <name type="common">South American scorpion</name>
    <dbReference type="NCBI Taxonomy" id="573324"/>
    <lineage>
        <taxon>Eukaryota</taxon>
        <taxon>Metazoa</taxon>
        <taxon>Ecdysozoa</taxon>
        <taxon>Arthropoda</taxon>
        <taxon>Chelicerata</taxon>
        <taxon>Arachnida</taxon>
        <taxon>Scorpiones</taxon>
        <taxon>Iurida</taxon>
        <taxon>Scorpionoidea</taxon>
        <taxon>Hemiscorpiidae</taxon>
        <taxon>Opisthacanthus</taxon>
    </lineage>
</organism>
<comment type="subcellular location">
    <subcellularLocation>
        <location evidence="1">Secreted</location>
    </subcellularLocation>
</comment>
<comment type="tissue specificity">
    <text evidence="1">Expressed by the venom gland.</text>
</comment>
<comment type="mass spectrometry"/>
<evidence type="ECO:0000269" key="1">
    <source>
    </source>
</evidence>
<evidence type="ECO:0000303" key="2">
    <source>
    </source>
</evidence>
<evidence type="ECO:0000305" key="3"/>
<accession>P86111</accession>
<feature type="peptide" id="PRO_0000398141" description="Venom peptide Ocy5" evidence="1">
    <location>
        <begin position="1"/>
        <end position="7" status="greater than"/>
    </location>
</feature>
<feature type="non-terminal residue" evidence="2">
    <location>
        <position position="7"/>
    </location>
</feature>
<dbReference type="GO" id="GO:0005576">
    <property type="term" value="C:extracellular region"/>
    <property type="evidence" value="ECO:0007669"/>
    <property type="project" value="UniProtKB-SubCell"/>
</dbReference>
<keyword id="KW-0903">Direct protein sequencing</keyword>
<keyword id="KW-0964">Secreted</keyword>
<protein>
    <recommendedName>
        <fullName>Venom peptide Ocy5</fullName>
    </recommendedName>
</protein>
<reference evidence="3" key="1">
    <citation type="journal article" date="2008" name="Toxicon">
        <title>Mass spectrometry analysis, amino acid sequence and biological activity of venom components from the Brazilian scorpion Opisthacanthus cayaporum.</title>
        <authorList>
            <person name="Schwartz E.F."/>
            <person name="Camargos T.S."/>
            <person name="Zamudio F.Z."/>
            <person name="Silva L.P."/>
            <person name="Bloch C. Jr."/>
            <person name="Caixeta F."/>
            <person name="Schwartz C.A."/>
            <person name="Possani L.D."/>
        </authorList>
    </citation>
    <scope>PROTEIN SEQUENCE</scope>
    <scope>SUBCELLULAR LOCATION</scope>
    <scope>TISSUE SPECIFICITY</scope>
    <scope>MASS SPECTROMETRY</scope>
    <source>
        <tissue evidence="1">Venom</tissue>
    </source>
</reference>
<sequence>LGKSVTN</sequence>
<name>VP05_OPICY</name>